<protein>
    <recommendedName>
        <fullName evidence="1">DNA-directed RNA polymerase subunit epsilon</fullName>
        <shortName evidence="1">RNAP epsilon subunit</shortName>
        <ecNumber evidence="1">2.7.7.6</ecNumber>
    </recommendedName>
    <alternativeName>
        <fullName evidence="1">RNA polymerase epsilon subunit</fullName>
    </alternativeName>
    <alternativeName>
        <fullName evidence="1">Transcriptase subunit epsilon</fullName>
    </alternativeName>
</protein>
<comment type="function">
    <text evidence="1">A non-essential component of RNA polymerase (RNAP).</text>
</comment>
<comment type="catalytic activity">
    <reaction evidence="1">
        <text>RNA(n) + a ribonucleoside 5'-triphosphate = RNA(n+1) + diphosphate</text>
        <dbReference type="Rhea" id="RHEA:21248"/>
        <dbReference type="Rhea" id="RHEA-COMP:14527"/>
        <dbReference type="Rhea" id="RHEA-COMP:17342"/>
        <dbReference type="ChEBI" id="CHEBI:33019"/>
        <dbReference type="ChEBI" id="CHEBI:61557"/>
        <dbReference type="ChEBI" id="CHEBI:140395"/>
        <dbReference type="EC" id="2.7.7.6"/>
    </reaction>
</comment>
<comment type="subunit">
    <text evidence="1">RNAP is composed of a core of 2 alpha, a beta and a beta' subunit. The core is associated with a delta subunit, and at least one of epsilon or omega. When a sigma factor is associated with the core the holoenzyme is formed, which can initiate transcription.</text>
</comment>
<comment type="similarity">
    <text evidence="1">Belongs to the RNA polymerase subunit epsilon family.</text>
</comment>
<evidence type="ECO:0000255" key="1">
    <source>
        <dbReference type="HAMAP-Rule" id="MF_01553"/>
    </source>
</evidence>
<reference key="1">
    <citation type="journal article" date="2005" name="Nat. Biotechnol.">
        <title>The complete genome sequence of the meat-borne lactic acid bacterium Lactobacillus sakei 23K.</title>
        <authorList>
            <person name="Chaillou S."/>
            <person name="Champomier-Verges M.-C."/>
            <person name="Cornet M."/>
            <person name="Crutz-Le Coq A.-M."/>
            <person name="Dudez A.-M."/>
            <person name="Martin V."/>
            <person name="Beaufils S."/>
            <person name="Darbon-Rongere E."/>
            <person name="Bossy R."/>
            <person name="Loux V."/>
            <person name="Zagorec M."/>
        </authorList>
    </citation>
    <scope>NUCLEOTIDE SEQUENCE [LARGE SCALE GENOMIC DNA]</scope>
    <source>
        <strain>23K</strain>
    </source>
</reference>
<proteinExistence type="inferred from homology"/>
<dbReference type="EC" id="2.7.7.6" evidence="1"/>
<dbReference type="EMBL" id="CR936503">
    <property type="protein sequence ID" value="CAI55392.1"/>
    <property type="molecule type" value="Genomic_DNA"/>
</dbReference>
<dbReference type="RefSeq" id="WP_011374791.1">
    <property type="nucleotide sequence ID" value="NC_007576.1"/>
</dbReference>
<dbReference type="SMR" id="Q38WN9"/>
<dbReference type="STRING" id="314315.LCA_1091"/>
<dbReference type="KEGG" id="lsa:LCA_1091"/>
<dbReference type="eggNOG" id="COG5503">
    <property type="taxonomic scope" value="Bacteria"/>
</dbReference>
<dbReference type="HOGENOM" id="CLU_187518_0_0_9"/>
<dbReference type="OrthoDB" id="2147503at2"/>
<dbReference type="Proteomes" id="UP000002707">
    <property type="component" value="Chromosome"/>
</dbReference>
<dbReference type="GO" id="GO:0000428">
    <property type="term" value="C:DNA-directed RNA polymerase complex"/>
    <property type="evidence" value="ECO:0007669"/>
    <property type="project" value="UniProtKB-KW"/>
</dbReference>
<dbReference type="GO" id="GO:0003677">
    <property type="term" value="F:DNA binding"/>
    <property type="evidence" value="ECO:0007669"/>
    <property type="project" value="UniProtKB-UniRule"/>
</dbReference>
<dbReference type="GO" id="GO:0003899">
    <property type="term" value="F:DNA-directed RNA polymerase activity"/>
    <property type="evidence" value="ECO:0007669"/>
    <property type="project" value="UniProtKB-UniRule"/>
</dbReference>
<dbReference type="GO" id="GO:0006351">
    <property type="term" value="P:DNA-templated transcription"/>
    <property type="evidence" value="ECO:0007669"/>
    <property type="project" value="UniProtKB-UniRule"/>
</dbReference>
<dbReference type="Gene3D" id="3.10.20.730">
    <property type="entry name" value="RNAP, epsilon subunit-like"/>
    <property type="match status" value="1"/>
</dbReference>
<dbReference type="HAMAP" id="MF_01553">
    <property type="entry name" value="RNApol_bact_RpoY"/>
    <property type="match status" value="1"/>
</dbReference>
<dbReference type="InterPro" id="IPR009907">
    <property type="entry name" value="RpoY"/>
</dbReference>
<dbReference type="NCBIfam" id="NF010188">
    <property type="entry name" value="PRK13667.1"/>
    <property type="match status" value="1"/>
</dbReference>
<dbReference type="Pfam" id="PF07288">
    <property type="entry name" value="RpoY"/>
    <property type="match status" value="1"/>
</dbReference>
<organism>
    <name type="scientific">Latilactobacillus sakei subsp. sakei (strain 23K)</name>
    <name type="common">Lactobacillus sakei subsp. sakei</name>
    <dbReference type="NCBI Taxonomy" id="314315"/>
    <lineage>
        <taxon>Bacteria</taxon>
        <taxon>Bacillati</taxon>
        <taxon>Bacillota</taxon>
        <taxon>Bacilli</taxon>
        <taxon>Lactobacillales</taxon>
        <taxon>Lactobacillaceae</taxon>
        <taxon>Latilactobacillus</taxon>
    </lineage>
</organism>
<accession>Q38WN9</accession>
<feature type="chain" id="PRO_1000068873" description="DNA-directed RNA polymerase subunit epsilon">
    <location>
        <begin position="1"/>
        <end position="70"/>
    </location>
</feature>
<sequence>MIYKVLFQADKTQSPLREATKSLYLEANSAVEARQLVEDNTPYNIEFVQELTGEHLAYEQESEDFKLTEF</sequence>
<name>RPOY_LATSS</name>
<gene>
    <name evidence="1" type="primary">rpoY</name>
    <name type="ordered locus">LCA_1091</name>
</gene>
<keyword id="KW-0240">DNA-directed RNA polymerase</keyword>
<keyword id="KW-0548">Nucleotidyltransferase</keyword>
<keyword id="KW-1185">Reference proteome</keyword>
<keyword id="KW-0804">Transcription</keyword>
<keyword id="KW-0808">Transferase</keyword>